<accession>Q9YGW2</accession>
<dbReference type="EMBL" id="AB023800">
    <property type="protein sequence ID" value="BAA75399.1"/>
    <property type="molecule type" value="mRNA"/>
</dbReference>
<dbReference type="PDB" id="1GCV">
    <property type="method" value="X-ray"/>
    <property type="resolution" value="2.00 A"/>
    <property type="chains" value="A/C=2-141"/>
</dbReference>
<dbReference type="PDB" id="1GCW">
    <property type="method" value="X-ray"/>
    <property type="resolution" value="2.00 A"/>
    <property type="chains" value="A/C=2-141"/>
</dbReference>
<dbReference type="PDBsum" id="1GCV"/>
<dbReference type="PDBsum" id="1GCW"/>
<dbReference type="SMR" id="Q9YGW2"/>
<dbReference type="EvolutionaryTrace" id="Q9YGW2"/>
<dbReference type="GO" id="GO:0072562">
    <property type="term" value="C:blood microparticle"/>
    <property type="evidence" value="ECO:0007669"/>
    <property type="project" value="TreeGrafter"/>
</dbReference>
<dbReference type="GO" id="GO:0031838">
    <property type="term" value="C:haptoglobin-hemoglobin complex"/>
    <property type="evidence" value="ECO:0007669"/>
    <property type="project" value="TreeGrafter"/>
</dbReference>
<dbReference type="GO" id="GO:0005833">
    <property type="term" value="C:hemoglobin complex"/>
    <property type="evidence" value="ECO:0007669"/>
    <property type="project" value="InterPro"/>
</dbReference>
<dbReference type="GO" id="GO:0031720">
    <property type="term" value="F:haptoglobin binding"/>
    <property type="evidence" value="ECO:0007669"/>
    <property type="project" value="TreeGrafter"/>
</dbReference>
<dbReference type="GO" id="GO:0020037">
    <property type="term" value="F:heme binding"/>
    <property type="evidence" value="ECO:0007669"/>
    <property type="project" value="InterPro"/>
</dbReference>
<dbReference type="GO" id="GO:0046872">
    <property type="term" value="F:metal ion binding"/>
    <property type="evidence" value="ECO:0007669"/>
    <property type="project" value="UniProtKB-KW"/>
</dbReference>
<dbReference type="GO" id="GO:0043177">
    <property type="term" value="F:organic acid binding"/>
    <property type="evidence" value="ECO:0007669"/>
    <property type="project" value="TreeGrafter"/>
</dbReference>
<dbReference type="GO" id="GO:0019825">
    <property type="term" value="F:oxygen binding"/>
    <property type="evidence" value="ECO:0007669"/>
    <property type="project" value="InterPro"/>
</dbReference>
<dbReference type="GO" id="GO:0005344">
    <property type="term" value="F:oxygen carrier activity"/>
    <property type="evidence" value="ECO:0007669"/>
    <property type="project" value="UniProtKB-KW"/>
</dbReference>
<dbReference type="GO" id="GO:0004601">
    <property type="term" value="F:peroxidase activity"/>
    <property type="evidence" value="ECO:0007669"/>
    <property type="project" value="TreeGrafter"/>
</dbReference>
<dbReference type="GO" id="GO:0042744">
    <property type="term" value="P:hydrogen peroxide catabolic process"/>
    <property type="evidence" value="ECO:0007669"/>
    <property type="project" value="TreeGrafter"/>
</dbReference>
<dbReference type="CDD" id="cd08927">
    <property type="entry name" value="Hb-alpha-like"/>
    <property type="match status" value="1"/>
</dbReference>
<dbReference type="Gene3D" id="1.10.490.10">
    <property type="entry name" value="Globins"/>
    <property type="match status" value="1"/>
</dbReference>
<dbReference type="InterPro" id="IPR000971">
    <property type="entry name" value="Globin"/>
</dbReference>
<dbReference type="InterPro" id="IPR009050">
    <property type="entry name" value="Globin-like_sf"/>
</dbReference>
<dbReference type="InterPro" id="IPR012292">
    <property type="entry name" value="Globin/Proto"/>
</dbReference>
<dbReference type="InterPro" id="IPR002338">
    <property type="entry name" value="Hemoglobin_a-typ"/>
</dbReference>
<dbReference type="InterPro" id="IPR050056">
    <property type="entry name" value="Hemoglobin_oxygen_transport"/>
</dbReference>
<dbReference type="PANTHER" id="PTHR11442">
    <property type="entry name" value="HEMOGLOBIN FAMILY MEMBER"/>
    <property type="match status" value="1"/>
</dbReference>
<dbReference type="Pfam" id="PF00042">
    <property type="entry name" value="Globin"/>
    <property type="match status" value="1"/>
</dbReference>
<dbReference type="PRINTS" id="PR00612">
    <property type="entry name" value="ALPHAHAEM"/>
</dbReference>
<dbReference type="SUPFAM" id="SSF46458">
    <property type="entry name" value="Globin-like"/>
    <property type="match status" value="1"/>
</dbReference>
<dbReference type="PROSITE" id="PS01033">
    <property type="entry name" value="GLOBIN"/>
    <property type="match status" value="1"/>
</dbReference>
<proteinExistence type="evidence at protein level"/>
<gene>
    <name type="primary">HBA</name>
</gene>
<protein>
    <recommendedName>
        <fullName>Hemoglobin subunit alpha</fullName>
    </recommendedName>
    <alternativeName>
        <fullName>Alpha-globin</fullName>
    </alternativeName>
    <alternativeName>
        <fullName>Hemoglobin alpha chain</fullName>
    </alternativeName>
</protein>
<sequence>MAFTACEKQTIGKIAQVLAKSPEAYGAECLARLFVTHPGSKSYFEYKDYSAAGAKVQVHGGKVIRAVVKAAEHVDDLHSHLETLALTHGKKLLVDPQNFPMLSECIIVTLATHLTEFSPDTHCAVDKLLSAICQELSSRYR</sequence>
<comment type="function">
    <text>Involved in oxygen transport from gills to the various peripheral tissues.</text>
</comment>
<comment type="subunit">
    <text>Heterotetramer of two alpha chains and two beta chains.</text>
</comment>
<comment type="tissue specificity">
    <text>Red blood cells.</text>
</comment>
<comment type="similarity">
    <text evidence="1">Belongs to the globin family.</text>
</comment>
<organism>
    <name type="scientific">Mustelus griseus</name>
    <name type="common">Spotless smooth-hound</name>
    <dbReference type="NCBI Taxonomy" id="89020"/>
    <lineage>
        <taxon>Eukaryota</taxon>
        <taxon>Metazoa</taxon>
        <taxon>Chordata</taxon>
        <taxon>Craniata</taxon>
        <taxon>Vertebrata</taxon>
        <taxon>Chondrichthyes</taxon>
        <taxon>Elasmobranchii</taxon>
        <taxon>Galeomorphii</taxon>
        <taxon>Galeoidea</taxon>
        <taxon>Carcharhiniformes</taxon>
        <taxon>Triakidae</taxon>
        <taxon>Mustelus</taxon>
    </lineage>
</organism>
<evidence type="ECO:0000255" key="1">
    <source>
        <dbReference type="PROSITE-ProRule" id="PRU00238"/>
    </source>
</evidence>
<evidence type="ECO:0007829" key="2">
    <source>
        <dbReference type="PDB" id="1GCV"/>
    </source>
</evidence>
<name>HBA_MUSGR</name>
<feature type="chain" id="PRO_0000052695" description="Hemoglobin subunit alpha">
    <location>
        <begin position="1"/>
        <end position="141"/>
    </location>
</feature>
<feature type="domain" description="Globin" evidence="1">
    <location>
        <begin position="2"/>
        <end position="141"/>
    </location>
</feature>
<feature type="binding site" evidence="1">
    <location>
        <position position="59"/>
    </location>
    <ligand>
        <name>O2</name>
        <dbReference type="ChEBI" id="CHEBI:15379"/>
    </ligand>
</feature>
<feature type="binding site" description="proximal binding residue" evidence="1">
    <location>
        <position position="88"/>
    </location>
    <ligand>
        <name>heme b</name>
        <dbReference type="ChEBI" id="CHEBI:60344"/>
    </ligand>
    <ligandPart>
        <name>Fe</name>
        <dbReference type="ChEBI" id="CHEBI:18248"/>
    </ligandPart>
</feature>
<feature type="helix" evidence="2">
    <location>
        <begin position="5"/>
        <end position="20"/>
    </location>
</feature>
<feature type="helix" evidence="2">
    <location>
        <begin position="22"/>
        <end position="36"/>
    </location>
</feature>
<feature type="helix" evidence="2">
    <location>
        <begin position="38"/>
        <end position="43"/>
    </location>
</feature>
<feature type="helix" evidence="2">
    <location>
        <begin position="54"/>
        <end position="72"/>
    </location>
</feature>
<feature type="helix" evidence="2">
    <location>
        <begin position="74"/>
        <end position="76"/>
    </location>
</feature>
<feature type="helix" evidence="2">
    <location>
        <begin position="77"/>
        <end position="80"/>
    </location>
</feature>
<feature type="helix" evidence="2">
    <location>
        <begin position="82"/>
        <end position="90"/>
    </location>
</feature>
<feature type="helix" evidence="2">
    <location>
        <begin position="96"/>
        <end position="98"/>
    </location>
</feature>
<feature type="helix" evidence="2">
    <location>
        <begin position="99"/>
        <end position="113"/>
    </location>
</feature>
<feature type="helix" evidence="2">
    <location>
        <begin position="119"/>
        <end position="136"/>
    </location>
</feature>
<feature type="turn" evidence="2">
    <location>
        <begin position="137"/>
        <end position="139"/>
    </location>
</feature>
<reference key="1">
    <citation type="submission" date="1999-02" db="EMBL/GenBank/DDBJ databases">
        <title>Hemoglobin alpha chain of spotless smooth hound (Mustelus griseus).</title>
        <authorList>
            <person name="Miyazaki G."/>
            <person name="Yoshimatu K."/>
            <person name="Kawasaki Y."/>
            <person name="Suzuki T."/>
        </authorList>
    </citation>
    <scope>NUCLEOTIDE SEQUENCE [MRNA]</scope>
</reference>
<reference key="2">
    <citation type="journal article" date="2001" name="J. Mol. Biol.">
        <title>The functional similarity and structural diversity of human and cartilaginous fish hemoglobins.</title>
        <authorList>
            <person name="Naoi Y."/>
            <person name="Chong K.T."/>
            <person name="Yoshimatsu K."/>
            <person name="Miyazaki G."/>
            <person name="Tame J.R."/>
            <person name="Park S.Y."/>
            <person name="Adachi S."/>
            <person name="Morimoto H."/>
        </authorList>
    </citation>
    <scope>X-RAY CRYSTALLOGRAPHY (2.0 ANGSTROMS) OF 2-141</scope>
</reference>
<keyword id="KW-0002">3D-structure</keyword>
<keyword id="KW-0349">Heme</keyword>
<keyword id="KW-0408">Iron</keyword>
<keyword id="KW-0479">Metal-binding</keyword>
<keyword id="KW-0561">Oxygen transport</keyword>
<keyword id="KW-0813">Transport</keyword>